<reference key="1">
    <citation type="submission" date="2005-02" db="EMBL/GenBank/DDBJ databases">
        <title>Prediction of the coding sequences of mouse homologues of KIAA gene. The complete nucleotide sequences of mouse KIAA-homologous cDNAs identified by screening of terminal sequences of cDNA clones randomly sampled from size-fractionated libraries.</title>
        <authorList>
            <person name="Okazaki N."/>
            <person name="Kikuno R.F."/>
            <person name="Ohara R."/>
            <person name="Inamoto S."/>
            <person name="Seino S."/>
            <person name="Nishimura M."/>
            <person name="Nagase T."/>
            <person name="Ohara O."/>
            <person name="Koga H."/>
        </authorList>
    </citation>
    <scope>NUCLEOTIDE SEQUENCE [LARGE SCALE MRNA]</scope>
    <source>
        <tissue>Pancreatic islet</tissue>
    </source>
</reference>
<reference key="2">
    <citation type="journal article" date="2004" name="Genome Res.">
        <title>The status, quality, and expansion of the NIH full-length cDNA project: the Mammalian Gene Collection (MGC).</title>
        <authorList>
            <consortium name="The MGC Project Team"/>
        </authorList>
    </citation>
    <scope>NUCLEOTIDE SEQUENCE [LARGE SCALE MRNA] OF 130-552</scope>
    <source>
        <strain>FVB/N</strain>
        <tissue>Liver</tissue>
    </source>
</reference>
<sequence>MRQSWRPELLIVGAVVVIEGLQAAQRACGQRGPGPPEPQEGNTLPGEWPWQASVRRQGVHICSGSLVADTWVLTAAHCFEKMATAELSSWSVVLGSLKQEGQSPGAEEVGVAALQLPKAYNHYSQGSDLALLQLTHPTVQTTLCLPQPTYHFPFGASCWATGWDQNTSDVSRTLRNLRLRLISRPTCNCLYNRLHQRLLSNPARPGMLCGGAQPGEQGPCQGDSGGPVMCREPDGHWVQVGIISFTSKCAQEDTPVLLTDMAVHSSWLQAHVHEAAFLVQAPGVVKMSDENSCVACGSLRSAGPQAGALSQWPWDARLKHHGKLACGGALVSEVVVLTAAHCFIGRQTLEEWSVGLGAGPEEWGLKQLILHGAYTHPEGGYDVAFLLLAQPVTLGPGLRPLCLPYADHHLPDGEHGWVLGLTQKAGINYPQTVPVTVLGPMACSRQHAAPGGTGIPILPGMVCTTVVGEPPHCEGLSGAPLVHEIRGTWFLVGLHSFGDTCQSSAKPAVFAALSAYEDWISNLDWQVYFAEEPEPEAETGSCLVNSSQPASC</sequence>
<organism>
    <name type="scientific">Mus musculus</name>
    <name type="common">Mouse</name>
    <dbReference type="NCBI Taxonomy" id="10090"/>
    <lineage>
        <taxon>Eukaryota</taxon>
        <taxon>Metazoa</taxon>
        <taxon>Chordata</taxon>
        <taxon>Craniata</taxon>
        <taxon>Vertebrata</taxon>
        <taxon>Euteleostomi</taxon>
        <taxon>Mammalia</taxon>
        <taxon>Eutheria</taxon>
        <taxon>Euarchontoglires</taxon>
        <taxon>Glires</taxon>
        <taxon>Rodentia</taxon>
        <taxon>Myomorpha</taxon>
        <taxon>Muroidea</taxon>
        <taxon>Muridae</taxon>
        <taxon>Murinae</taxon>
        <taxon>Mus</taxon>
        <taxon>Mus</taxon>
    </lineage>
</organism>
<proteinExistence type="evidence at transcript level"/>
<keyword id="KW-1015">Disulfide bond</keyword>
<keyword id="KW-0378">Hydrolase</keyword>
<keyword id="KW-0645">Protease</keyword>
<keyword id="KW-1185">Reference proteome</keyword>
<keyword id="KW-0677">Repeat</keyword>
<keyword id="KW-0964">Secreted</keyword>
<keyword id="KW-0720">Serine protease</keyword>
<keyword id="KW-0732">Signal</keyword>
<gene>
    <name type="primary">Prss53</name>
</gene>
<feature type="signal peptide" evidence="2">
    <location>
        <begin position="1"/>
        <end position="23"/>
    </location>
</feature>
<feature type="chain" id="PRO_0000316764" description="Serine protease 53">
    <location>
        <begin position="24"/>
        <end position="552"/>
    </location>
</feature>
<feature type="domain" description="Peptidase S1 1" evidence="3">
    <location>
        <begin position="24"/>
        <end position="273"/>
    </location>
</feature>
<feature type="domain" description="Peptidase S1 2" evidence="3">
    <location>
        <begin position="294"/>
        <end position="525"/>
    </location>
</feature>
<feature type="region of interest" description="Disordered" evidence="4">
    <location>
        <begin position="27"/>
        <end position="46"/>
    </location>
</feature>
<feature type="active site" description="Charge relay system" evidence="1">
    <location>
        <position position="77"/>
    </location>
</feature>
<feature type="active site" description="Charge relay system" evidence="1">
    <location>
        <position position="128"/>
    </location>
</feature>
<feature type="active site" description="Charge relay system" evidence="1">
    <location>
        <position position="224"/>
    </location>
</feature>
<feature type="active site" description="Charge relay system" evidence="1">
    <location>
        <position position="341"/>
    </location>
</feature>
<feature type="active site" description="Charge relay system" evidence="1">
    <location>
        <position position="382"/>
    </location>
</feature>
<feature type="active site" description="Charge relay system" evidence="1">
    <location>
        <position position="477"/>
    </location>
</feature>
<feature type="disulfide bond" evidence="3">
    <location>
        <begin position="62"/>
        <end position="78"/>
    </location>
</feature>
<feature type="disulfide bond" evidence="3">
    <location>
        <begin position="158"/>
        <end position="230"/>
    </location>
</feature>
<feature type="disulfide bond" evidence="3">
    <location>
        <begin position="187"/>
        <end position="209"/>
    </location>
</feature>
<feature type="disulfide bond" evidence="3">
    <location>
        <begin position="220"/>
        <end position="249"/>
    </location>
</feature>
<feature type="disulfide bond" evidence="3">
    <location>
        <begin position="326"/>
        <end position="342"/>
    </location>
</feature>
<feature type="disulfide bond" evidence="3">
    <location>
        <begin position="443"/>
        <end position="463"/>
    </location>
</feature>
<feature type="disulfide bond" evidence="3">
    <location>
        <begin position="473"/>
        <end position="501"/>
    </location>
</feature>
<accession>Q571E5</accession>
<accession>Q8CFX9</accession>
<evidence type="ECO:0000250" key="1"/>
<evidence type="ECO:0000255" key="2"/>
<evidence type="ECO:0000255" key="3">
    <source>
        <dbReference type="PROSITE-ProRule" id="PRU00274"/>
    </source>
</evidence>
<evidence type="ECO:0000256" key="4">
    <source>
        <dbReference type="SAM" id="MobiDB-lite"/>
    </source>
</evidence>
<evidence type="ECO:0000305" key="5"/>
<comment type="function">
    <text evidence="1">In vitro can degrade the fibrinogen alpha chain of as well as pro-urokinase-type plasminogen activator.</text>
</comment>
<comment type="subcellular location">
    <subcellularLocation>
        <location evidence="1">Secreted</location>
    </subcellularLocation>
</comment>
<comment type="similarity">
    <text evidence="3">Belongs to the peptidase S1 family.</text>
</comment>
<comment type="sequence caution" evidence="5">
    <conflict type="erroneous initiation">
        <sequence resource="EMBL-CDS" id="AAH39632"/>
    </conflict>
</comment>
<comment type="sequence caution" evidence="5">
    <conflict type="erroneous initiation">
        <sequence resource="EMBL-CDS" id="BAD90169"/>
    </conflict>
</comment>
<name>PRS53_MOUSE</name>
<protein>
    <recommendedName>
        <fullName>Serine protease 53</fullName>
        <ecNumber>3.4.21.-</ecNumber>
    </recommendedName>
    <alternativeName>
        <fullName>Polyserine protease 3</fullName>
        <shortName>Polyserase-3</shortName>
    </alternativeName>
</protein>
<dbReference type="EC" id="3.4.21.-"/>
<dbReference type="EMBL" id="AK220244">
    <property type="protein sequence ID" value="BAD90169.1"/>
    <property type="status" value="ALT_INIT"/>
    <property type="molecule type" value="mRNA"/>
</dbReference>
<dbReference type="EMBL" id="BC039632">
    <property type="protein sequence ID" value="AAH39632.1"/>
    <property type="status" value="ALT_INIT"/>
    <property type="molecule type" value="mRNA"/>
</dbReference>
<dbReference type="CCDS" id="CCDS52409.1"/>
<dbReference type="RefSeq" id="NP_001074737.1">
    <property type="nucleotide sequence ID" value="NM_001081268.1"/>
</dbReference>
<dbReference type="RefSeq" id="XP_017177807.1">
    <property type="nucleotide sequence ID" value="XM_017322318.1"/>
</dbReference>
<dbReference type="SMR" id="Q571E5"/>
<dbReference type="FunCoup" id="Q571E5">
    <property type="interactions" value="3"/>
</dbReference>
<dbReference type="STRING" id="10090.ENSMUSP00000112972"/>
<dbReference type="MEROPS" id="S01.374"/>
<dbReference type="PaxDb" id="10090-ENSMUSP00000112972"/>
<dbReference type="ProteomicsDB" id="291680"/>
<dbReference type="Antibodypedia" id="50883">
    <property type="antibodies" value="28 antibodies from 8 providers"/>
</dbReference>
<dbReference type="DNASU" id="330657"/>
<dbReference type="Ensembl" id="ENSMUST00000121394.3">
    <property type="protein sequence ID" value="ENSMUSP00000112972.2"/>
    <property type="gene ID" value="ENSMUSG00000044139.13"/>
</dbReference>
<dbReference type="GeneID" id="330657"/>
<dbReference type="KEGG" id="mmu:330657"/>
<dbReference type="UCSC" id="uc009jxd.1">
    <property type="organism name" value="mouse"/>
</dbReference>
<dbReference type="AGR" id="MGI:2652890"/>
<dbReference type="CTD" id="339105"/>
<dbReference type="MGI" id="MGI:2652890">
    <property type="gene designation" value="Prss53"/>
</dbReference>
<dbReference type="VEuPathDB" id="HostDB:ENSMUSG00000044139"/>
<dbReference type="eggNOG" id="KOG3627">
    <property type="taxonomic scope" value="Eukaryota"/>
</dbReference>
<dbReference type="GeneTree" id="ENSGT00940000162122"/>
<dbReference type="HOGENOM" id="CLU_004497_4_0_1"/>
<dbReference type="InParanoid" id="Q571E5"/>
<dbReference type="OMA" id="SYMCTGC"/>
<dbReference type="OrthoDB" id="9006044at2759"/>
<dbReference type="PhylomeDB" id="Q571E5"/>
<dbReference type="TreeFam" id="TF321170"/>
<dbReference type="BioGRID-ORCS" id="330657">
    <property type="hits" value="1 hit in 80 CRISPR screens"/>
</dbReference>
<dbReference type="ChiTaRS" id="Prss53">
    <property type="organism name" value="mouse"/>
</dbReference>
<dbReference type="PRO" id="PR:Q571E5"/>
<dbReference type="Proteomes" id="UP000000589">
    <property type="component" value="Chromosome 7"/>
</dbReference>
<dbReference type="RNAct" id="Q571E5">
    <property type="molecule type" value="protein"/>
</dbReference>
<dbReference type="Bgee" id="ENSMUSG00000044139">
    <property type="expression patterns" value="Expressed in islet of Langerhans and 59 other cell types or tissues"/>
</dbReference>
<dbReference type="ExpressionAtlas" id="Q571E5">
    <property type="expression patterns" value="baseline and differential"/>
</dbReference>
<dbReference type="GO" id="GO:0005576">
    <property type="term" value="C:extracellular region"/>
    <property type="evidence" value="ECO:0007669"/>
    <property type="project" value="UniProtKB-SubCell"/>
</dbReference>
<dbReference type="GO" id="GO:0004252">
    <property type="term" value="F:serine-type endopeptidase activity"/>
    <property type="evidence" value="ECO:0007669"/>
    <property type="project" value="InterPro"/>
</dbReference>
<dbReference type="GO" id="GO:0006508">
    <property type="term" value="P:proteolysis"/>
    <property type="evidence" value="ECO:0007669"/>
    <property type="project" value="UniProtKB-KW"/>
</dbReference>
<dbReference type="CDD" id="cd00190">
    <property type="entry name" value="Tryp_SPc"/>
    <property type="match status" value="2"/>
</dbReference>
<dbReference type="FunFam" id="2.40.10.10:FF:000024">
    <property type="entry name" value="Serine protease 53"/>
    <property type="match status" value="1"/>
</dbReference>
<dbReference type="FunFam" id="2.40.10.10:FF:000079">
    <property type="entry name" value="Serine protease 53"/>
    <property type="match status" value="1"/>
</dbReference>
<dbReference type="Gene3D" id="2.40.10.10">
    <property type="entry name" value="Trypsin-like serine proteases"/>
    <property type="match status" value="2"/>
</dbReference>
<dbReference type="InterPro" id="IPR009003">
    <property type="entry name" value="Peptidase_S1_PA"/>
</dbReference>
<dbReference type="InterPro" id="IPR043504">
    <property type="entry name" value="Peptidase_S1_PA_chymotrypsin"/>
</dbReference>
<dbReference type="InterPro" id="IPR001314">
    <property type="entry name" value="Peptidase_S1A"/>
</dbReference>
<dbReference type="InterPro" id="IPR001254">
    <property type="entry name" value="Trypsin_dom"/>
</dbReference>
<dbReference type="InterPro" id="IPR018114">
    <property type="entry name" value="TRYPSIN_HIS"/>
</dbReference>
<dbReference type="InterPro" id="IPR033116">
    <property type="entry name" value="TRYPSIN_SER"/>
</dbReference>
<dbReference type="PANTHER" id="PTHR24253:SF58">
    <property type="entry name" value="SERINE PROTEASE 33"/>
    <property type="match status" value="1"/>
</dbReference>
<dbReference type="PANTHER" id="PTHR24253">
    <property type="entry name" value="TRANSMEMBRANE PROTEASE SERINE"/>
    <property type="match status" value="1"/>
</dbReference>
<dbReference type="Pfam" id="PF00089">
    <property type="entry name" value="Trypsin"/>
    <property type="match status" value="2"/>
</dbReference>
<dbReference type="PRINTS" id="PR00722">
    <property type="entry name" value="CHYMOTRYPSIN"/>
</dbReference>
<dbReference type="SMART" id="SM00020">
    <property type="entry name" value="Tryp_SPc"/>
    <property type="match status" value="2"/>
</dbReference>
<dbReference type="SUPFAM" id="SSF50494">
    <property type="entry name" value="Trypsin-like serine proteases"/>
    <property type="match status" value="2"/>
</dbReference>
<dbReference type="PROSITE" id="PS50240">
    <property type="entry name" value="TRYPSIN_DOM"/>
    <property type="match status" value="2"/>
</dbReference>
<dbReference type="PROSITE" id="PS00134">
    <property type="entry name" value="TRYPSIN_HIS"/>
    <property type="match status" value="2"/>
</dbReference>
<dbReference type="PROSITE" id="PS00135">
    <property type="entry name" value="TRYPSIN_SER"/>
    <property type="match status" value="1"/>
</dbReference>